<feature type="chain" id="PRO_1000146059" description="Small ribosomal subunit protein uS10">
    <location>
        <begin position="1"/>
        <end position="103"/>
    </location>
</feature>
<organism>
    <name type="scientific">Laribacter hongkongensis (strain HLHK9)</name>
    <dbReference type="NCBI Taxonomy" id="557598"/>
    <lineage>
        <taxon>Bacteria</taxon>
        <taxon>Pseudomonadati</taxon>
        <taxon>Pseudomonadota</taxon>
        <taxon>Betaproteobacteria</taxon>
        <taxon>Neisseriales</taxon>
        <taxon>Aquaspirillaceae</taxon>
        <taxon>Laribacter</taxon>
    </lineage>
</organism>
<gene>
    <name evidence="1" type="primary">rpsJ</name>
    <name type="ordered locus">LHK_00252</name>
</gene>
<proteinExistence type="inferred from homology"/>
<comment type="function">
    <text evidence="1">Involved in the binding of tRNA to the ribosomes.</text>
</comment>
<comment type="subunit">
    <text evidence="1">Part of the 30S ribosomal subunit.</text>
</comment>
<comment type="similarity">
    <text evidence="1">Belongs to the universal ribosomal protein uS10 family.</text>
</comment>
<protein>
    <recommendedName>
        <fullName evidence="1">Small ribosomal subunit protein uS10</fullName>
    </recommendedName>
    <alternativeName>
        <fullName evidence="2">30S ribosomal protein S10</fullName>
    </alternativeName>
</protein>
<accession>C1DAR6</accession>
<dbReference type="EMBL" id="CP001154">
    <property type="protein sequence ID" value="ACO73247.1"/>
    <property type="molecule type" value="Genomic_DNA"/>
</dbReference>
<dbReference type="RefSeq" id="WP_012695741.1">
    <property type="nucleotide sequence ID" value="NC_012559.1"/>
</dbReference>
<dbReference type="SMR" id="C1DAR6"/>
<dbReference type="STRING" id="557598.LHK_00252"/>
<dbReference type="GeneID" id="75109508"/>
<dbReference type="KEGG" id="lhk:LHK_00252"/>
<dbReference type="eggNOG" id="COG0051">
    <property type="taxonomic scope" value="Bacteria"/>
</dbReference>
<dbReference type="HOGENOM" id="CLU_122625_1_3_4"/>
<dbReference type="Proteomes" id="UP000002010">
    <property type="component" value="Chromosome"/>
</dbReference>
<dbReference type="GO" id="GO:1990904">
    <property type="term" value="C:ribonucleoprotein complex"/>
    <property type="evidence" value="ECO:0007669"/>
    <property type="project" value="UniProtKB-KW"/>
</dbReference>
<dbReference type="GO" id="GO:0005840">
    <property type="term" value="C:ribosome"/>
    <property type="evidence" value="ECO:0007669"/>
    <property type="project" value="UniProtKB-KW"/>
</dbReference>
<dbReference type="GO" id="GO:0003735">
    <property type="term" value="F:structural constituent of ribosome"/>
    <property type="evidence" value="ECO:0007669"/>
    <property type="project" value="InterPro"/>
</dbReference>
<dbReference type="GO" id="GO:0000049">
    <property type="term" value="F:tRNA binding"/>
    <property type="evidence" value="ECO:0007669"/>
    <property type="project" value="UniProtKB-UniRule"/>
</dbReference>
<dbReference type="GO" id="GO:0006412">
    <property type="term" value="P:translation"/>
    <property type="evidence" value="ECO:0007669"/>
    <property type="project" value="UniProtKB-UniRule"/>
</dbReference>
<dbReference type="FunFam" id="3.30.70.600:FF:000001">
    <property type="entry name" value="30S ribosomal protein S10"/>
    <property type="match status" value="1"/>
</dbReference>
<dbReference type="Gene3D" id="3.30.70.600">
    <property type="entry name" value="Ribosomal protein S10 domain"/>
    <property type="match status" value="1"/>
</dbReference>
<dbReference type="HAMAP" id="MF_00508">
    <property type="entry name" value="Ribosomal_uS10"/>
    <property type="match status" value="1"/>
</dbReference>
<dbReference type="InterPro" id="IPR001848">
    <property type="entry name" value="Ribosomal_uS10"/>
</dbReference>
<dbReference type="InterPro" id="IPR018268">
    <property type="entry name" value="Ribosomal_uS10_CS"/>
</dbReference>
<dbReference type="InterPro" id="IPR027486">
    <property type="entry name" value="Ribosomal_uS10_dom"/>
</dbReference>
<dbReference type="InterPro" id="IPR036838">
    <property type="entry name" value="Ribosomal_uS10_dom_sf"/>
</dbReference>
<dbReference type="NCBIfam" id="NF001861">
    <property type="entry name" value="PRK00596.1"/>
    <property type="match status" value="1"/>
</dbReference>
<dbReference type="NCBIfam" id="TIGR01049">
    <property type="entry name" value="rpsJ_bact"/>
    <property type="match status" value="1"/>
</dbReference>
<dbReference type="PANTHER" id="PTHR11700">
    <property type="entry name" value="30S RIBOSOMAL PROTEIN S10 FAMILY MEMBER"/>
    <property type="match status" value="1"/>
</dbReference>
<dbReference type="Pfam" id="PF00338">
    <property type="entry name" value="Ribosomal_S10"/>
    <property type="match status" value="1"/>
</dbReference>
<dbReference type="PRINTS" id="PR00971">
    <property type="entry name" value="RIBOSOMALS10"/>
</dbReference>
<dbReference type="SMART" id="SM01403">
    <property type="entry name" value="Ribosomal_S10"/>
    <property type="match status" value="1"/>
</dbReference>
<dbReference type="SUPFAM" id="SSF54999">
    <property type="entry name" value="Ribosomal protein S10"/>
    <property type="match status" value="1"/>
</dbReference>
<dbReference type="PROSITE" id="PS00361">
    <property type="entry name" value="RIBOSOMAL_S10"/>
    <property type="match status" value="1"/>
</dbReference>
<name>RS10_LARHH</name>
<sequence length="103" mass="11844">MQNQKIRIRLKAFDYHLIDRSAQEIVDTAKRTGAVVKGPVPLPTKIERFDILRSPHVNKTSRDQFEIRTHLRLMDIIDPTDKTVDALMKLDLPAGVDVEIKLQ</sequence>
<keyword id="KW-1185">Reference proteome</keyword>
<keyword id="KW-0687">Ribonucleoprotein</keyword>
<keyword id="KW-0689">Ribosomal protein</keyword>
<evidence type="ECO:0000255" key="1">
    <source>
        <dbReference type="HAMAP-Rule" id="MF_00508"/>
    </source>
</evidence>
<evidence type="ECO:0000305" key="2"/>
<reference key="1">
    <citation type="journal article" date="2009" name="PLoS Genet.">
        <title>The complete genome and proteome of Laribacter hongkongensis reveal potential mechanisms for adaptations to different temperatures and habitats.</title>
        <authorList>
            <person name="Woo P.C.Y."/>
            <person name="Lau S.K.P."/>
            <person name="Tse H."/>
            <person name="Teng J.L.L."/>
            <person name="Curreem S.O."/>
            <person name="Tsang A.K.L."/>
            <person name="Fan R.Y.Y."/>
            <person name="Wong G.K.M."/>
            <person name="Huang Y."/>
            <person name="Loman N.J."/>
            <person name="Snyder L.A.S."/>
            <person name="Cai J.J."/>
            <person name="Huang J.-D."/>
            <person name="Mak W."/>
            <person name="Pallen M.J."/>
            <person name="Lok S."/>
            <person name="Yuen K.-Y."/>
        </authorList>
    </citation>
    <scope>NUCLEOTIDE SEQUENCE [LARGE SCALE GENOMIC DNA]</scope>
    <source>
        <strain>HLHK9</strain>
    </source>
</reference>